<name>RPAB2_CAEEL</name>
<organism>
    <name type="scientific">Caenorhabditis elegans</name>
    <dbReference type="NCBI Taxonomy" id="6239"/>
    <lineage>
        <taxon>Eukaryota</taxon>
        <taxon>Metazoa</taxon>
        <taxon>Ecdysozoa</taxon>
        <taxon>Nematoda</taxon>
        <taxon>Chromadorea</taxon>
        <taxon>Rhabditida</taxon>
        <taxon>Rhabditina</taxon>
        <taxon>Rhabditomorpha</taxon>
        <taxon>Rhabditoidea</taxon>
        <taxon>Rhabditidae</taxon>
        <taxon>Peloderinae</taxon>
        <taxon>Caenorhabditis</taxon>
    </lineage>
</organism>
<accession>Q17684</accession>
<feature type="chain" id="PRO_0000133804" description="Probable DNA-directed RNA polymerases I, II, and III subunit RPABC2">
    <location>
        <begin position="1"/>
        <end position="137"/>
    </location>
</feature>
<feature type="region of interest" description="Disordered" evidence="2">
    <location>
        <begin position="1"/>
        <end position="43"/>
    </location>
</feature>
<feature type="compositionally biased region" description="Acidic residues" evidence="2">
    <location>
        <begin position="1"/>
        <end position="27"/>
    </location>
</feature>
<feature type="compositionally biased region" description="Acidic residues" evidence="2">
    <location>
        <begin position="34"/>
        <end position="43"/>
    </location>
</feature>
<reference key="1">
    <citation type="journal article" date="1998" name="Science">
        <title>Genome sequence of the nematode C. elegans: a platform for investigating biology.</title>
        <authorList>
            <consortium name="The C. elegans sequencing consortium"/>
        </authorList>
    </citation>
    <scope>NUCLEOTIDE SEQUENCE [LARGE SCALE GENOMIC DNA]</scope>
    <source>
        <strain>Bristol N2</strain>
    </source>
</reference>
<proteinExistence type="inferred from homology"/>
<sequence>MADEDDYQDMDNDDFVDDNEMEDVIEEDPQRPDNEDEDDDNVDENFELFDQGKAVPTSEHVTTPFMTKYERARVLGTRALQIAMGAPVMVELEGETDPLEIARKELKQRRIPIIVRRYLPDGSYEDWPTDQLQLADW</sequence>
<dbReference type="EMBL" id="Z49886">
    <property type="protein sequence ID" value="CAA90053.1"/>
    <property type="molecule type" value="Genomic_DNA"/>
</dbReference>
<dbReference type="PIR" id="T18973">
    <property type="entry name" value="T18973"/>
</dbReference>
<dbReference type="RefSeq" id="NP_496278.1">
    <property type="nucleotide sequence ID" value="NM_063877.5"/>
</dbReference>
<dbReference type="SMR" id="Q17684"/>
<dbReference type="BioGRID" id="39944">
    <property type="interactions" value="23"/>
</dbReference>
<dbReference type="ComplexPortal" id="CPX-2812">
    <property type="entry name" value="DNA-directed RNA polymerase III complex"/>
</dbReference>
<dbReference type="ComplexPortal" id="CPX-8913">
    <property type="entry name" value="DNA-directed RNA polymerase I complex"/>
</dbReference>
<dbReference type="FunCoup" id="Q17684">
    <property type="interactions" value="1989"/>
</dbReference>
<dbReference type="STRING" id="6239.C06A1.5.1"/>
<dbReference type="PaxDb" id="6239-C06A1.5"/>
<dbReference type="PeptideAtlas" id="Q17684"/>
<dbReference type="EnsemblMetazoa" id="C06A1.5.1">
    <property type="protein sequence ID" value="C06A1.5.1"/>
    <property type="gene ID" value="WBGene00007355"/>
</dbReference>
<dbReference type="GeneID" id="174630"/>
<dbReference type="KEGG" id="cel:CELE_C06A1.5"/>
<dbReference type="AGR" id="WB:WBGene00007355"/>
<dbReference type="CTD" id="174630"/>
<dbReference type="WormBase" id="C06A1.5">
    <property type="protein sequence ID" value="CE02117"/>
    <property type="gene ID" value="WBGene00007355"/>
    <property type="gene designation" value="rpb-6"/>
</dbReference>
<dbReference type="eggNOG" id="KOG3405">
    <property type="taxonomic scope" value="Eukaryota"/>
</dbReference>
<dbReference type="GeneTree" id="ENSGT00390000010415"/>
<dbReference type="HOGENOM" id="CLU_112527_0_1_1"/>
<dbReference type="InParanoid" id="Q17684"/>
<dbReference type="OMA" id="EDWPTEQ"/>
<dbReference type="OrthoDB" id="259769at2759"/>
<dbReference type="PhylomeDB" id="Q17684"/>
<dbReference type="Reactome" id="R-CEL-112382">
    <property type="pathway name" value="Formation of RNA Pol II elongation complex"/>
</dbReference>
<dbReference type="Reactome" id="R-CEL-113418">
    <property type="pathway name" value="Formation of the Early Elongation Complex"/>
</dbReference>
<dbReference type="Reactome" id="R-CEL-5250924">
    <property type="pathway name" value="B-WICH complex positively regulates rRNA expression"/>
</dbReference>
<dbReference type="Reactome" id="R-CEL-5578749">
    <property type="pathway name" value="Transcriptional regulation by small RNAs"/>
</dbReference>
<dbReference type="Reactome" id="R-CEL-674695">
    <property type="pathway name" value="RNA Polymerase II Pre-transcription Events"/>
</dbReference>
<dbReference type="Reactome" id="R-CEL-6781823">
    <property type="pathway name" value="Formation of TC-NER Pre-Incision Complex"/>
</dbReference>
<dbReference type="Reactome" id="R-CEL-6782135">
    <property type="pathway name" value="Dual incision in TC-NER"/>
</dbReference>
<dbReference type="Reactome" id="R-CEL-6782210">
    <property type="pathway name" value="Gap-filling DNA repair synthesis and ligation in TC-NER"/>
</dbReference>
<dbReference type="Reactome" id="R-CEL-6796648">
    <property type="pathway name" value="TP53 Regulates Transcription of DNA Repair Genes"/>
</dbReference>
<dbReference type="Reactome" id="R-CEL-6803529">
    <property type="pathway name" value="FGFR2 alternative splicing"/>
</dbReference>
<dbReference type="Reactome" id="R-CEL-6807505">
    <property type="pathway name" value="RNA polymerase II transcribes snRNA genes"/>
</dbReference>
<dbReference type="Reactome" id="R-CEL-72086">
    <property type="pathway name" value="mRNA Capping"/>
</dbReference>
<dbReference type="Reactome" id="R-CEL-72163">
    <property type="pathway name" value="mRNA Splicing - Major Pathway"/>
</dbReference>
<dbReference type="Reactome" id="R-CEL-72165">
    <property type="pathway name" value="mRNA Splicing - Minor Pathway"/>
</dbReference>
<dbReference type="Reactome" id="R-CEL-72203">
    <property type="pathway name" value="Processing of Capped Intron-Containing Pre-mRNA"/>
</dbReference>
<dbReference type="Reactome" id="R-CEL-73762">
    <property type="pathway name" value="RNA Polymerase I Transcription Initiation"/>
</dbReference>
<dbReference type="Reactome" id="R-CEL-73772">
    <property type="pathway name" value="RNA Polymerase I Promoter Escape"/>
</dbReference>
<dbReference type="Reactome" id="R-CEL-73776">
    <property type="pathway name" value="RNA Polymerase II Promoter Escape"/>
</dbReference>
<dbReference type="Reactome" id="R-CEL-73779">
    <property type="pathway name" value="RNA Polymerase II Transcription Pre-Initiation And Promoter Opening"/>
</dbReference>
<dbReference type="Reactome" id="R-CEL-75953">
    <property type="pathway name" value="RNA Polymerase II Transcription Initiation"/>
</dbReference>
<dbReference type="Reactome" id="R-CEL-75955">
    <property type="pathway name" value="RNA Polymerase II Transcription Elongation"/>
</dbReference>
<dbReference type="Reactome" id="R-CEL-76042">
    <property type="pathway name" value="RNA Polymerase II Transcription Initiation And Promoter Clearance"/>
</dbReference>
<dbReference type="Reactome" id="R-CEL-77075">
    <property type="pathway name" value="RNA Pol II CTD phosphorylation and interaction with CE"/>
</dbReference>
<dbReference type="Reactome" id="R-CEL-9018519">
    <property type="pathway name" value="Estrogen-dependent gene expression"/>
</dbReference>
<dbReference type="PRO" id="PR:Q17684"/>
<dbReference type="Proteomes" id="UP000001940">
    <property type="component" value="Chromosome II"/>
</dbReference>
<dbReference type="Bgee" id="WBGene00007355">
    <property type="expression patterns" value="Expressed in embryo and 4 other cell types or tissues"/>
</dbReference>
<dbReference type="GO" id="GO:0005736">
    <property type="term" value="C:RNA polymerase I complex"/>
    <property type="evidence" value="ECO:0000318"/>
    <property type="project" value="GO_Central"/>
</dbReference>
<dbReference type="GO" id="GO:0005665">
    <property type="term" value="C:RNA polymerase II, core complex"/>
    <property type="evidence" value="ECO:0000318"/>
    <property type="project" value="GO_Central"/>
</dbReference>
<dbReference type="GO" id="GO:0005666">
    <property type="term" value="C:RNA polymerase III complex"/>
    <property type="evidence" value="ECO:0000318"/>
    <property type="project" value="GO_Central"/>
</dbReference>
<dbReference type="GO" id="GO:0003677">
    <property type="term" value="F:DNA binding"/>
    <property type="evidence" value="ECO:0007669"/>
    <property type="project" value="InterPro"/>
</dbReference>
<dbReference type="GO" id="GO:0003899">
    <property type="term" value="F:DNA-directed RNA polymerase activity"/>
    <property type="evidence" value="ECO:0007669"/>
    <property type="project" value="InterPro"/>
</dbReference>
<dbReference type="GO" id="GO:0110044">
    <property type="term" value="P:regulation of cell cycle switching, mitotic to meiotic cell cycle"/>
    <property type="evidence" value="ECO:0000315"/>
    <property type="project" value="UniProtKB"/>
</dbReference>
<dbReference type="GO" id="GO:0006360">
    <property type="term" value="P:transcription by RNA polymerase I"/>
    <property type="evidence" value="ECO:0000318"/>
    <property type="project" value="GO_Central"/>
</dbReference>
<dbReference type="GO" id="GO:0006366">
    <property type="term" value="P:transcription by RNA polymerase II"/>
    <property type="evidence" value="ECO:0000318"/>
    <property type="project" value="GO_Central"/>
</dbReference>
<dbReference type="GO" id="GO:0042797">
    <property type="term" value="P:tRNA transcription by RNA polymerase III"/>
    <property type="evidence" value="ECO:0000318"/>
    <property type="project" value="GO_Central"/>
</dbReference>
<dbReference type="FunFam" id="3.90.940.10:FF:000005">
    <property type="entry name" value="Probable DNA-directed RNA polymerases I, II, and III subunit RPABC2"/>
    <property type="match status" value="1"/>
</dbReference>
<dbReference type="Gene3D" id="3.90.940.10">
    <property type="match status" value="1"/>
</dbReference>
<dbReference type="HAMAP" id="MF_00192">
    <property type="entry name" value="RNApol_arch_Rpo6"/>
    <property type="match status" value="1"/>
</dbReference>
<dbReference type="InterPro" id="IPR020708">
    <property type="entry name" value="DNA-dir_RNA_polK_14-18kDa_CS"/>
</dbReference>
<dbReference type="InterPro" id="IPR018247">
    <property type="entry name" value="EF_Hand_1_Ca_BS"/>
</dbReference>
<dbReference type="InterPro" id="IPR006110">
    <property type="entry name" value="Pol_omega/Rpo6/RPB6"/>
</dbReference>
<dbReference type="InterPro" id="IPR028363">
    <property type="entry name" value="RPB6"/>
</dbReference>
<dbReference type="InterPro" id="IPR036161">
    <property type="entry name" value="RPB6/omega-like_sf"/>
</dbReference>
<dbReference type="InterPro" id="IPR006111">
    <property type="entry name" value="Rpo6/Rpb6"/>
</dbReference>
<dbReference type="NCBIfam" id="NF002207">
    <property type="entry name" value="PRK01099.1-2"/>
    <property type="match status" value="1"/>
</dbReference>
<dbReference type="NCBIfam" id="NF002208">
    <property type="entry name" value="PRK01099.1-3"/>
    <property type="match status" value="1"/>
</dbReference>
<dbReference type="PANTHER" id="PTHR47227">
    <property type="entry name" value="DNA-DIRECTED RNA POLYMERASE SUBUNIT K"/>
    <property type="match status" value="1"/>
</dbReference>
<dbReference type="PANTHER" id="PTHR47227:SF5">
    <property type="entry name" value="DNA-DIRECTED RNA POLYMERASES I, II, AND III SUBUNIT RPABC2"/>
    <property type="match status" value="1"/>
</dbReference>
<dbReference type="Pfam" id="PF01192">
    <property type="entry name" value="RNA_pol_Rpb6"/>
    <property type="match status" value="1"/>
</dbReference>
<dbReference type="PIRSF" id="PIRSF500154">
    <property type="entry name" value="RPB6"/>
    <property type="match status" value="1"/>
</dbReference>
<dbReference type="PIRSF" id="PIRSF000778">
    <property type="entry name" value="RpoK/RPB6"/>
    <property type="match status" value="1"/>
</dbReference>
<dbReference type="SUPFAM" id="SSF63562">
    <property type="entry name" value="RPB6/omega subunit-like"/>
    <property type="match status" value="1"/>
</dbReference>
<dbReference type="PROSITE" id="PS01111">
    <property type="entry name" value="RNA_POL_K_14KD"/>
    <property type="match status" value="1"/>
</dbReference>
<evidence type="ECO:0000250" key="1"/>
<evidence type="ECO:0000256" key="2">
    <source>
        <dbReference type="SAM" id="MobiDB-lite"/>
    </source>
</evidence>
<evidence type="ECO:0000305" key="3"/>
<keyword id="KW-0240">DNA-directed RNA polymerase</keyword>
<keyword id="KW-0539">Nucleus</keyword>
<keyword id="KW-1185">Reference proteome</keyword>
<keyword id="KW-0804">Transcription</keyword>
<protein>
    <recommendedName>
        <fullName>Probable DNA-directed RNA polymerases I, II, and III subunit RPABC2</fullName>
        <shortName>RNA polymerases I, II, and III subunit ABC2</shortName>
    </recommendedName>
    <alternativeName>
        <fullName>RPB6 homolog</fullName>
    </alternativeName>
</protein>
<gene>
    <name type="primary">rpb-6</name>
    <name type="ORF">C06A1.5</name>
</gene>
<comment type="function">
    <text evidence="1">DNA-dependent RNA polymerases catalyze the transcription of DNA into RNA using the four ribonucleoside triphosphates as substrates. Common component of RNA polymerases I, II and III which synthesize ribosomal RNA precursors, mRNA precursors and many functional non-coding RNAs, and small RNAs, such as 5S rRNA and tRNAs, respectively. Pol II is the central component of the basal RNA polymerase II transcription machinery. Pols are composed of mobile elements that move relative to each other. In Pol II, RPB6 is part of the clamp element and together with parts of RPB1 and RPB2 forms a pocket to which the RPB4-RPB7 subcomplex binds (By similarity).</text>
</comment>
<comment type="subunit">
    <text evidence="1">Component of the RNA polymerase I (Pol I), RNA polymerase II (Pol II) and RNA polymerase III (Pol III) complexes consisting of at least 13, 12 and 17 subunits, respectively.</text>
</comment>
<comment type="subcellular location">
    <subcellularLocation>
        <location evidence="1">Nucleus</location>
    </subcellularLocation>
</comment>
<comment type="similarity">
    <text evidence="3">Belongs to the archaeal Rpo6/eukaryotic RPB6 RNA polymerase subunit family.</text>
</comment>